<dbReference type="EMBL" id="AE014295">
    <property type="protein sequence ID" value="AAN25384.1"/>
    <property type="molecule type" value="Genomic_DNA"/>
</dbReference>
<dbReference type="RefSeq" id="NP_696748.1">
    <property type="nucleotide sequence ID" value="NC_004307.2"/>
</dbReference>
<dbReference type="RefSeq" id="WP_007053040.1">
    <property type="nucleotide sequence ID" value="NC_004307.2"/>
</dbReference>
<dbReference type="SMR" id="Q8G403"/>
<dbReference type="STRING" id="206672.BL1595"/>
<dbReference type="EnsemblBacteria" id="AAN25384">
    <property type="protein sequence ID" value="AAN25384"/>
    <property type="gene ID" value="BL1595"/>
</dbReference>
<dbReference type="GeneID" id="69578882"/>
<dbReference type="KEGG" id="blo:BL1595"/>
<dbReference type="PATRIC" id="fig|206672.9.peg.1650"/>
<dbReference type="HOGENOM" id="CLU_065464_1_2_11"/>
<dbReference type="OrthoDB" id="9805007at2"/>
<dbReference type="PhylomeDB" id="Q8G403"/>
<dbReference type="Proteomes" id="UP000000439">
    <property type="component" value="Chromosome"/>
</dbReference>
<dbReference type="GO" id="GO:0022625">
    <property type="term" value="C:cytosolic large ribosomal subunit"/>
    <property type="evidence" value="ECO:0007669"/>
    <property type="project" value="TreeGrafter"/>
</dbReference>
<dbReference type="GO" id="GO:0019843">
    <property type="term" value="F:rRNA binding"/>
    <property type="evidence" value="ECO:0007669"/>
    <property type="project" value="UniProtKB-UniRule"/>
</dbReference>
<dbReference type="GO" id="GO:0003735">
    <property type="term" value="F:structural constituent of ribosome"/>
    <property type="evidence" value="ECO:0007669"/>
    <property type="project" value="InterPro"/>
</dbReference>
<dbReference type="GO" id="GO:0002181">
    <property type="term" value="P:cytoplasmic translation"/>
    <property type="evidence" value="ECO:0007669"/>
    <property type="project" value="TreeGrafter"/>
</dbReference>
<dbReference type="FunFam" id="3.90.930.12:FF:000001">
    <property type="entry name" value="50S ribosomal protein L6"/>
    <property type="match status" value="1"/>
</dbReference>
<dbReference type="Gene3D" id="3.90.930.12">
    <property type="entry name" value="Ribosomal protein L6, alpha-beta domain"/>
    <property type="match status" value="2"/>
</dbReference>
<dbReference type="HAMAP" id="MF_01365_B">
    <property type="entry name" value="Ribosomal_uL6_B"/>
    <property type="match status" value="1"/>
</dbReference>
<dbReference type="InterPro" id="IPR000702">
    <property type="entry name" value="Ribosomal_uL6-like"/>
</dbReference>
<dbReference type="InterPro" id="IPR036789">
    <property type="entry name" value="Ribosomal_uL6-like_a/b-dom_sf"/>
</dbReference>
<dbReference type="InterPro" id="IPR020040">
    <property type="entry name" value="Ribosomal_uL6_a/b-dom"/>
</dbReference>
<dbReference type="InterPro" id="IPR019906">
    <property type="entry name" value="Ribosomal_uL6_bac-type"/>
</dbReference>
<dbReference type="InterPro" id="IPR002358">
    <property type="entry name" value="Ribosomal_uL6_CS"/>
</dbReference>
<dbReference type="NCBIfam" id="TIGR03654">
    <property type="entry name" value="L6_bact"/>
    <property type="match status" value="1"/>
</dbReference>
<dbReference type="PANTHER" id="PTHR11655">
    <property type="entry name" value="60S/50S RIBOSOMAL PROTEIN L6/L9"/>
    <property type="match status" value="1"/>
</dbReference>
<dbReference type="PANTHER" id="PTHR11655:SF14">
    <property type="entry name" value="LARGE RIBOSOMAL SUBUNIT PROTEIN UL6M"/>
    <property type="match status" value="1"/>
</dbReference>
<dbReference type="Pfam" id="PF00347">
    <property type="entry name" value="Ribosomal_L6"/>
    <property type="match status" value="2"/>
</dbReference>
<dbReference type="PIRSF" id="PIRSF002162">
    <property type="entry name" value="Ribosomal_L6"/>
    <property type="match status" value="1"/>
</dbReference>
<dbReference type="PRINTS" id="PR00059">
    <property type="entry name" value="RIBOSOMALL6"/>
</dbReference>
<dbReference type="SUPFAM" id="SSF56053">
    <property type="entry name" value="Ribosomal protein L6"/>
    <property type="match status" value="2"/>
</dbReference>
<dbReference type="PROSITE" id="PS00525">
    <property type="entry name" value="RIBOSOMAL_L6_1"/>
    <property type="match status" value="1"/>
</dbReference>
<sequence length="179" mass="18861">MASHIGKLPIAIPAGVEVKIEGQNFSAKGAKGSDSYVVPEGITAAVEGNEIVLTAADDLRPTRAKHGLARSIMAGMVKGVHDGYSKTLEIVGTGYRAVAKGQGIEFFLGYSHTITVNPPEGITLKVTDANHVVVEGTDKQVVGQVAANIRKLRAPEPYKGKGIKYSDERILRKAGKAGK</sequence>
<gene>
    <name evidence="1" type="primary">rplF</name>
    <name type="ordered locus">BL1595</name>
</gene>
<name>RL6_BIFLO</name>
<feature type="chain" id="PRO_0000265219" description="Large ribosomal subunit protein uL6">
    <location>
        <begin position="1"/>
        <end position="179"/>
    </location>
</feature>
<proteinExistence type="inferred from homology"/>
<reference key="1">
    <citation type="journal article" date="2002" name="Proc. Natl. Acad. Sci. U.S.A.">
        <title>The genome sequence of Bifidobacterium longum reflects its adaptation to the human gastrointestinal tract.</title>
        <authorList>
            <person name="Schell M.A."/>
            <person name="Karmirantzou M."/>
            <person name="Snel B."/>
            <person name="Vilanova D."/>
            <person name="Berger B."/>
            <person name="Pessi G."/>
            <person name="Zwahlen M.-C."/>
            <person name="Desiere F."/>
            <person name="Bork P."/>
            <person name="Delley M."/>
            <person name="Pridmore R.D."/>
            <person name="Arigoni F."/>
        </authorList>
    </citation>
    <scope>NUCLEOTIDE SEQUENCE [LARGE SCALE GENOMIC DNA]</scope>
    <source>
        <strain>NCC 2705</strain>
    </source>
</reference>
<comment type="function">
    <text evidence="1">This protein binds to the 23S rRNA, and is important in its secondary structure. It is located near the subunit interface in the base of the L7/L12 stalk, and near the tRNA binding site of the peptidyltransferase center.</text>
</comment>
<comment type="subunit">
    <text evidence="1">Part of the 50S ribosomal subunit.</text>
</comment>
<comment type="similarity">
    <text evidence="1">Belongs to the universal ribosomal protein uL6 family.</text>
</comment>
<evidence type="ECO:0000255" key="1">
    <source>
        <dbReference type="HAMAP-Rule" id="MF_01365"/>
    </source>
</evidence>
<evidence type="ECO:0000305" key="2"/>
<keyword id="KW-1185">Reference proteome</keyword>
<keyword id="KW-0687">Ribonucleoprotein</keyword>
<keyword id="KW-0689">Ribosomal protein</keyword>
<keyword id="KW-0694">RNA-binding</keyword>
<keyword id="KW-0699">rRNA-binding</keyword>
<protein>
    <recommendedName>
        <fullName evidence="1">Large ribosomal subunit protein uL6</fullName>
    </recommendedName>
    <alternativeName>
        <fullName evidence="2">50S ribosomal protein L6</fullName>
    </alternativeName>
</protein>
<accession>Q8G403</accession>
<organism>
    <name type="scientific">Bifidobacterium longum (strain NCC 2705)</name>
    <dbReference type="NCBI Taxonomy" id="206672"/>
    <lineage>
        <taxon>Bacteria</taxon>
        <taxon>Bacillati</taxon>
        <taxon>Actinomycetota</taxon>
        <taxon>Actinomycetes</taxon>
        <taxon>Bifidobacteriales</taxon>
        <taxon>Bifidobacteriaceae</taxon>
        <taxon>Bifidobacterium</taxon>
    </lineage>
</organism>